<name>PGFRL_RAT</name>
<keyword id="KW-1015">Disulfide bond</keyword>
<keyword id="KW-0325">Glycoprotein</keyword>
<keyword id="KW-0393">Immunoglobulin domain</keyword>
<keyword id="KW-1185">Reference proteome</keyword>
<keyword id="KW-0677">Repeat</keyword>
<keyword id="KW-0964">Secreted</keyword>
<keyword id="KW-0732">Signal</keyword>
<protein>
    <recommendedName>
        <fullName>Platelet-derived growth factor receptor-like protein</fullName>
        <shortName>PDGFR-like protein</shortName>
    </recommendedName>
</protein>
<feature type="signal peptide" evidence="2">
    <location>
        <begin position="1"/>
        <end position="17"/>
    </location>
</feature>
<feature type="chain" id="PRO_0000233093" description="Platelet-derived growth factor receptor-like protein">
    <location>
        <begin position="18"/>
        <end position="375"/>
    </location>
</feature>
<feature type="domain" description="Ig-like C2-type 1">
    <location>
        <begin position="62"/>
        <end position="159"/>
    </location>
</feature>
<feature type="domain" description="Ig-like C2-type 2">
    <location>
        <begin position="272"/>
        <end position="375"/>
    </location>
</feature>
<feature type="region of interest" description="Disordered" evidence="4">
    <location>
        <begin position="19"/>
        <end position="63"/>
    </location>
</feature>
<feature type="compositionally biased region" description="Basic residues" evidence="4">
    <location>
        <begin position="40"/>
        <end position="50"/>
    </location>
</feature>
<feature type="glycosylation site" description="N-linked (GlcNAc...) asparagine" evidence="2">
    <location>
        <position position="219"/>
    </location>
</feature>
<feature type="disulfide bond" evidence="3">
    <location>
        <begin position="96"/>
        <end position="143"/>
    </location>
</feature>
<feature type="disulfide bond" evidence="3">
    <location>
        <begin position="293"/>
        <end position="357"/>
    </location>
</feature>
<sequence length="375" mass="41933">MKVWLLLGLLLLHEALGDVAGQHPPKNKRPKEQGENRIKPTNKKAKPKIPKIKDRDTADSAPKSQSIMMQAMDNGRFQKPAATVSLMAGQSVELRCKGSKVEWSYPAYLDTFKDSRLTVKQNERYGQLTLVNSTTADTGEFSCWERLCNGYICRRDEARTGSTYIFFTEKGELFVPSPSYFDVVYLNPDRQAVVPCRVTAPSAKVTLHREFPAKEIPANGTDIVYDMKRGFVYLQPHSDHQGVVYCKAEAGGKSQISVKYQLLYVEVPSGPPSTTILASSNKVRGGDDISVLCTVLGEPDVEVEFRWIFPGQKDERPVTIQDTWRLIHRGLGHTTRISQSVITVEDFETIDAGYYICTAQNLRGQTTVATTVEFS</sequence>
<comment type="subunit">
    <text evidence="1">Forms a complex composed of PDGFRL, TNK2 and GRB2.</text>
</comment>
<comment type="subcellular location">
    <subcellularLocation>
        <location evidence="5">Secreted</location>
    </subcellularLocation>
</comment>
<evidence type="ECO:0000250" key="1"/>
<evidence type="ECO:0000255" key="2"/>
<evidence type="ECO:0000255" key="3">
    <source>
        <dbReference type="PROSITE-ProRule" id="PRU00114"/>
    </source>
</evidence>
<evidence type="ECO:0000256" key="4">
    <source>
        <dbReference type="SAM" id="MobiDB-lite"/>
    </source>
</evidence>
<evidence type="ECO:0000305" key="5"/>
<gene>
    <name type="primary">Pdgfrl</name>
</gene>
<dbReference type="EMBL" id="BC086555">
    <property type="protein sequence ID" value="AAH86555.1"/>
    <property type="molecule type" value="mRNA"/>
</dbReference>
<dbReference type="RefSeq" id="NP_001011921.1">
    <property type="nucleotide sequence ID" value="NM_001011921.1"/>
</dbReference>
<dbReference type="SMR" id="Q5RJP7"/>
<dbReference type="FunCoup" id="Q5RJP7">
    <property type="interactions" value="28"/>
</dbReference>
<dbReference type="STRING" id="10116.ENSRNOP00000014623"/>
<dbReference type="GlyCosmos" id="Q5RJP7">
    <property type="glycosylation" value="1 site, No reported glycans"/>
</dbReference>
<dbReference type="GlyGen" id="Q5RJP7">
    <property type="glycosylation" value="1 site"/>
</dbReference>
<dbReference type="PhosphoSitePlus" id="Q5RJP7"/>
<dbReference type="PaxDb" id="10116-ENSRNOP00000014623"/>
<dbReference type="Ensembl" id="ENSRNOT00000014623.6">
    <property type="protein sequence ID" value="ENSRNOP00000014623.5"/>
    <property type="gene ID" value="ENSRNOG00000010832.6"/>
</dbReference>
<dbReference type="GeneID" id="290771"/>
<dbReference type="KEGG" id="rno:290771"/>
<dbReference type="AGR" id="RGD:1308028"/>
<dbReference type="CTD" id="5157"/>
<dbReference type="RGD" id="1308028">
    <property type="gene designation" value="Pdgfrl"/>
</dbReference>
<dbReference type="eggNOG" id="KOG0200">
    <property type="taxonomic scope" value="Eukaryota"/>
</dbReference>
<dbReference type="GeneTree" id="ENSGT00390000017153"/>
<dbReference type="HOGENOM" id="CLU_062833_0_0_1"/>
<dbReference type="InParanoid" id="Q5RJP7"/>
<dbReference type="OMA" id="CWGQLCN"/>
<dbReference type="OrthoDB" id="43356at9989"/>
<dbReference type="PhylomeDB" id="Q5RJP7"/>
<dbReference type="PRO" id="PR:Q5RJP7"/>
<dbReference type="Proteomes" id="UP000002494">
    <property type="component" value="Chromosome 16"/>
</dbReference>
<dbReference type="Bgee" id="ENSRNOG00000010832">
    <property type="expression patterns" value="Expressed in quadriceps femoris and 18 other cell types or tissues"/>
</dbReference>
<dbReference type="GO" id="GO:0005576">
    <property type="term" value="C:extracellular region"/>
    <property type="evidence" value="ECO:0007669"/>
    <property type="project" value="UniProtKB-SubCell"/>
</dbReference>
<dbReference type="FunFam" id="2.60.40.10:FF:000223">
    <property type="entry name" value="Platelet-derived growth factor receptor beta"/>
    <property type="match status" value="1"/>
</dbReference>
<dbReference type="FunFam" id="2.60.40.10:FF:000907">
    <property type="entry name" value="Platelet-derived growth factor receptor-like protein"/>
    <property type="match status" value="1"/>
</dbReference>
<dbReference type="FunFam" id="2.60.40.10:FF:001395">
    <property type="entry name" value="Platelet-derived growth factor receptor-like protein"/>
    <property type="match status" value="1"/>
</dbReference>
<dbReference type="Gene3D" id="2.60.40.10">
    <property type="entry name" value="Immunoglobulins"/>
    <property type="match status" value="3"/>
</dbReference>
<dbReference type="InterPro" id="IPR007110">
    <property type="entry name" value="Ig-like_dom"/>
</dbReference>
<dbReference type="InterPro" id="IPR036179">
    <property type="entry name" value="Ig-like_dom_sf"/>
</dbReference>
<dbReference type="InterPro" id="IPR013783">
    <property type="entry name" value="Ig-like_fold"/>
</dbReference>
<dbReference type="InterPro" id="IPR003599">
    <property type="entry name" value="Ig_sub"/>
</dbReference>
<dbReference type="InterPro" id="IPR042495">
    <property type="entry name" value="PDGFRL"/>
</dbReference>
<dbReference type="PANTHER" id="PTHR15360">
    <property type="entry name" value="PLATELET-DERIVED GROWTH FACTOR RECEPTOR LIKE"/>
    <property type="match status" value="1"/>
</dbReference>
<dbReference type="PANTHER" id="PTHR15360:SF1">
    <property type="entry name" value="PLATELET-DERIVED GROWTH FACTOR RECEPTOR-LIKE PROTEIN"/>
    <property type="match status" value="1"/>
</dbReference>
<dbReference type="Pfam" id="PF13927">
    <property type="entry name" value="Ig_3"/>
    <property type="match status" value="1"/>
</dbReference>
<dbReference type="Pfam" id="PF21339">
    <property type="entry name" value="VEGFR-1-like_Ig-like"/>
    <property type="match status" value="1"/>
</dbReference>
<dbReference type="SMART" id="SM00409">
    <property type="entry name" value="IG"/>
    <property type="match status" value="2"/>
</dbReference>
<dbReference type="SUPFAM" id="SSF48726">
    <property type="entry name" value="Immunoglobulin"/>
    <property type="match status" value="3"/>
</dbReference>
<dbReference type="PROSITE" id="PS50835">
    <property type="entry name" value="IG_LIKE"/>
    <property type="match status" value="2"/>
</dbReference>
<proteinExistence type="evidence at transcript level"/>
<reference key="1">
    <citation type="journal article" date="2004" name="Genome Res.">
        <title>The status, quality, and expansion of the NIH full-length cDNA project: the Mammalian Gene Collection (MGC).</title>
        <authorList>
            <consortium name="The MGC Project Team"/>
        </authorList>
    </citation>
    <scope>NUCLEOTIDE SEQUENCE [LARGE SCALE MRNA]</scope>
    <source>
        <tissue>Ovary</tissue>
    </source>
</reference>
<organism>
    <name type="scientific">Rattus norvegicus</name>
    <name type="common">Rat</name>
    <dbReference type="NCBI Taxonomy" id="10116"/>
    <lineage>
        <taxon>Eukaryota</taxon>
        <taxon>Metazoa</taxon>
        <taxon>Chordata</taxon>
        <taxon>Craniata</taxon>
        <taxon>Vertebrata</taxon>
        <taxon>Euteleostomi</taxon>
        <taxon>Mammalia</taxon>
        <taxon>Eutheria</taxon>
        <taxon>Euarchontoglires</taxon>
        <taxon>Glires</taxon>
        <taxon>Rodentia</taxon>
        <taxon>Myomorpha</taxon>
        <taxon>Muroidea</taxon>
        <taxon>Muridae</taxon>
        <taxon>Murinae</taxon>
        <taxon>Rattus</taxon>
    </lineage>
</organism>
<accession>Q5RJP7</accession>